<dbReference type="EMBL" id="CP000308">
    <property type="protein sequence ID" value="ABG15636.1"/>
    <property type="molecule type" value="Genomic_DNA"/>
</dbReference>
<dbReference type="RefSeq" id="WP_002210072.1">
    <property type="nucleotide sequence ID" value="NZ_CP009906.1"/>
</dbReference>
<dbReference type="SMR" id="Q1C1N6"/>
<dbReference type="GeneID" id="57975086"/>
<dbReference type="KEGG" id="ypa:YPA_3674"/>
<dbReference type="Proteomes" id="UP000001971">
    <property type="component" value="Chromosome"/>
</dbReference>
<dbReference type="GO" id="GO:0005886">
    <property type="term" value="C:plasma membrane"/>
    <property type="evidence" value="ECO:0007669"/>
    <property type="project" value="UniProtKB-SubCell"/>
</dbReference>
<dbReference type="GO" id="GO:0009055">
    <property type="term" value="F:electron transfer activity"/>
    <property type="evidence" value="ECO:0007669"/>
    <property type="project" value="UniProtKB-UniRule"/>
</dbReference>
<dbReference type="GO" id="GO:0010181">
    <property type="term" value="F:FMN binding"/>
    <property type="evidence" value="ECO:0007669"/>
    <property type="project" value="UniProtKB-UniRule"/>
</dbReference>
<dbReference type="GO" id="GO:0020037">
    <property type="term" value="F:heme binding"/>
    <property type="evidence" value="ECO:0007669"/>
    <property type="project" value="UniProtKB-UniRule"/>
</dbReference>
<dbReference type="GO" id="GO:0046872">
    <property type="term" value="F:metal ion binding"/>
    <property type="evidence" value="ECO:0007669"/>
    <property type="project" value="UniProtKB-KW"/>
</dbReference>
<dbReference type="GO" id="GO:0016679">
    <property type="term" value="F:oxidoreductase activity, acting on diphenols and related substances as donors"/>
    <property type="evidence" value="ECO:0007669"/>
    <property type="project" value="TreeGrafter"/>
</dbReference>
<dbReference type="GO" id="GO:0030091">
    <property type="term" value="P:protein repair"/>
    <property type="evidence" value="ECO:0007669"/>
    <property type="project" value="UniProtKB-UniRule"/>
</dbReference>
<dbReference type="HAMAP" id="MF_01207">
    <property type="entry name" value="MsrQ"/>
    <property type="match status" value="1"/>
</dbReference>
<dbReference type="InterPro" id="IPR013130">
    <property type="entry name" value="Fe3_Rdtase_TM_dom"/>
</dbReference>
<dbReference type="InterPro" id="IPR022837">
    <property type="entry name" value="MsrQ-like"/>
</dbReference>
<dbReference type="NCBIfam" id="NF003832">
    <property type="entry name" value="PRK05419.1-4"/>
    <property type="match status" value="1"/>
</dbReference>
<dbReference type="PANTHER" id="PTHR36964">
    <property type="entry name" value="PROTEIN-METHIONINE-SULFOXIDE REDUCTASE HEME-BINDING SUBUNIT MSRQ"/>
    <property type="match status" value="1"/>
</dbReference>
<dbReference type="PANTHER" id="PTHR36964:SF1">
    <property type="entry name" value="PROTEIN-METHIONINE-SULFOXIDE REDUCTASE HEME-BINDING SUBUNIT MSRQ"/>
    <property type="match status" value="1"/>
</dbReference>
<dbReference type="Pfam" id="PF01794">
    <property type="entry name" value="Ferric_reduct"/>
    <property type="match status" value="1"/>
</dbReference>
<accession>Q1C1N6</accession>
<proteinExistence type="inferred from homology"/>
<organism>
    <name type="scientific">Yersinia pestis bv. Antiqua (strain Antiqua)</name>
    <dbReference type="NCBI Taxonomy" id="360102"/>
    <lineage>
        <taxon>Bacteria</taxon>
        <taxon>Pseudomonadati</taxon>
        <taxon>Pseudomonadota</taxon>
        <taxon>Gammaproteobacteria</taxon>
        <taxon>Enterobacterales</taxon>
        <taxon>Yersiniaceae</taxon>
        <taxon>Yersinia</taxon>
    </lineage>
</organism>
<gene>
    <name evidence="1" type="primary">msrQ</name>
    <name type="ordered locus">YPA_3674</name>
</gene>
<evidence type="ECO:0000255" key="1">
    <source>
        <dbReference type="HAMAP-Rule" id="MF_01207"/>
    </source>
</evidence>
<reference key="1">
    <citation type="journal article" date="2006" name="J. Bacteriol.">
        <title>Complete genome sequence of Yersinia pestis strains Antiqua and Nepal516: evidence of gene reduction in an emerging pathogen.</title>
        <authorList>
            <person name="Chain P.S.G."/>
            <person name="Hu P."/>
            <person name="Malfatti S.A."/>
            <person name="Radnedge L."/>
            <person name="Larimer F."/>
            <person name="Vergez L.M."/>
            <person name="Worsham P."/>
            <person name="Chu M.C."/>
            <person name="Andersen G.L."/>
        </authorList>
    </citation>
    <scope>NUCLEOTIDE SEQUENCE [LARGE SCALE GENOMIC DNA]</scope>
    <source>
        <strain>Antiqua</strain>
    </source>
</reference>
<feature type="chain" id="PRO_1000066195" description="Protein-methionine-sulfoxide reductase heme-binding subunit MsrQ">
    <location>
        <begin position="1"/>
        <end position="206"/>
    </location>
</feature>
<feature type="transmembrane region" description="Helical" evidence="1">
    <location>
        <begin position="13"/>
        <end position="33"/>
    </location>
</feature>
<feature type="transmembrane region" description="Helical" evidence="1">
    <location>
        <begin position="79"/>
        <end position="99"/>
    </location>
</feature>
<feature type="transmembrane region" description="Helical" evidence="1">
    <location>
        <begin position="116"/>
        <end position="136"/>
    </location>
</feature>
<feature type="transmembrane region" description="Helical" evidence="1">
    <location>
        <begin position="147"/>
        <end position="167"/>
    </location>
</feature>
<feature type="transmembrane region" description="Helical" evidence="1">
    <location>
        <begin position="169"/>
        <end position="189"/>
    </location>
</feature>
<sequence>MRLSLRHITWLKIAIWLAATLPLLWLVLSINLGGLSADPAKDIQHFTGRMALKLLLATLLVSPLARYSKQPLLLRCRRLLGLWCFAWGTLHLLSYSILELGLSNIGLLGHELINRPYLTLGIISWLVLLALALTSTRWAQRKMGARWQKLHNWVYVVAILAPIHYLWSVKTLSPWPIIYAVMAALLLLLRYKLLLPRYKKFRQWFR</sequence>
<comment type="function">
    <text evidence="1">Part of the MsrPQ system that repairs oxidized periplasmic proteins containing methionine sulfoxide residues (Met-O), using respiratory chain electrons. Thus protects these proteins from oxidative-stress damage caused by reactive species of oxygen and chlorine generated by the host defense mechanisms. MsrPQ is essential for the maintenance of envelope integrity under bleach stress, rescuing a wide series of structurally unrelated periplasmic proteins from methionine oxidation. MsrQ provides electrons for reduction to the reductase catalytic subunit MsrP, using the quinone pool of the respiratory chain.</text>
</comment>
<comment type="cofactor">
    <cofactor evidence="1">
        <name>FMN</name>
        <dbReference type="ChEBI" id="CHEBI:58210"/>
    </cofactor>
    <text evidence="1">Binds 1 FMN per subunit.</text>
</comment>
<comment type="cofactor">
    <cofactor evidence="1">
        <name>heme b</name>
        <dbReference type="ChEBI" id="CHEBI:60344"/>
    </cofactor>
    <text evidence="1">Binds 1 heme b (iron(II)-protoporphyrin IX) group per subunit.</text>
</comment>
<comment type="subunit">
    <text evidence="1">Heterodimer of a catalytic subunit (MsrP) and a heme-binding subunit (MsrQ).</text>
</comment>
<comment type="subcellular location">
    <subcellularLocation>
        <location evidence="1">Cell inner membrane</location>
        <topology evidence="1">Multi-pass membrane protein</topology>
    </subcellularLocation>
</comment>
<comment type="similarity">
    <text evidence="1">Belongs to the MsrQ family.</text>
</comment>
<name>MSRQ_YERPA</name>
<keyword id="KW-0997">Cell inner membrane</keyword>
<keyword id="KW-1003">Cell membrane</keyword>
<keyword id="KW-0249">Electron transport</keyword>
<keyword id="KW-0285">Flavoprotein</keyword>
<keyword id="KW-0288">FMN</keyword>
<keyword id="KW-0349">Heme</keyword>
<keyword id="KW-0408">Iron</keyword>
<keyword id="KW-0472">Membrane</keyword>
<keyword id="KW-0479">Metal-binding</keyword>
<keyword id="KW-0812">Transmembrane</keyword>
<keyword id="KW-1133">Transmembrane helix</keyword>
<keyword id="KW-0813">Transport</keyword>
<protein>
    <recommendedName>
        <fullName evidence="1">Protein-methionine-sulfoxide reductase heme-binding subunit MsrQ</fullName>
    </recommendedName>
    <alternativeName>
        <fullName evidence="1">Flavocytochrome MsrQ</fullName>
    </alternativeName>
</protein>